<accession>B2VDC8</accession>
<keyword id="KW-0998">Cell outer membrane</keyword>
<keyword id="KW-0133">Cell shape</keyword>
<keyword id="KW-0449">Lipoprotein</keyword>
<keyword id="KW-0472">Membrane</keyword>
<keyword id="KW-0564">Palmitate</keyword>
<keyword id="KW-0573">Peptidoglycan synthesis</keyword>
<keyword id="KW-1185">Reference proteome</keyword>
<keyword id="KW-0732">Signal</keyword>
<evidence type="ECO:0000255" key="1">
    <source>
        <dbReference type="HAMAP-Rule" id="MF_01890"/>
    </source>
</evidence>
<dbReference type="EMBL" id="CU468135">
    <property type="protein sequence ID" value="CAO97966.1"/>
    <property type="molecule type" value="Genomic_DNA"/>
</dbReference>
<dbReference type="RefSeq" id="WP_012442620.1">
    <property type="nucleotide sequence ID" value="NC_010694.1"/>
</dbReference>
<dbReference type="SMR" id="B2VDC8"/>
<dbReference type="STRING" id="465817.ETA_29200"/>
<dbReference type="KEGG" id="eta:ETA_29200"/>
<dbReference type="eggNOG" id="COG3107">
    <property type="taxonomic scope" value="Bacteria"/>
</dbReference>
<dbReference type="HOGENOM" id="CLU_026091_1_1_6"/>
<dbReference type="OrthoDB" id="6708821at2"/>
<dbReference type="Proteomes" id="UP000001726">
    <property type="component" value="Chromosome"/>
</dbReference>
<dbReference type="GO" id="GO:0031241">
    <property type="term" value="C:periplasmic side of cell outer membrane"/>
    <property type="evidence" value="ECO:0007669"/>
    <property type="project" value="UniProtKB-UniRule"/>
</dbReference>
<dbReference type="GO" id="GO:0030234">
    <property type="term" value="F:enzyme regulator activity"/>
    <property type="evidence" value="ECO:0007669"/>
    <property type="project" value="UniProtKB-UniRule"/>
</dbReference>
<dbReference type="GO" id="GO:0009252">
    <property type="term" value="P:peptidoglycan biosynthetic process"/>
    <property type="evidence" value="ECO:0007669"/>
    <property type="project" value="UniProtKB-UniRule"/>
</dbReference>
<dbReference type="GO" id="GO:0008360">
    <property type="term" value="P:regulation of cell shape"/>
    <property type="evidence" value="ECO:0007669"/>
    <property type="project" value="UniProtKB-KW"/>
</dbReference>
<dbReference type="CDD" id="cd06339">
    <property type="entry name" value="PBP1_YraM_LppC_lipoprotein-like"/>
    <property type="match status" value="1"/>
</dbReference>
<dbReference type="Gene3D" id="1.25.40.650">
    <property type="match status" value="1"/>
</dbReference>
<dbReference type="Gene3D" id="3.40.50.2300">
    <property type="match status" value="2"/>
</dbReference>
<dbReference type="Gene3D" id="1.25.40.10">
    <property type="entry name" value="Tetratricopeptide repeat domain"/>
    <property type="match status" value="1"/>
</dbReference>
<dbReference type="HAMAP" id="MF_01890">
    <property type="entry name" value="LpoA"/>
    <property type="match status" value="1"/>
</dbReference>
<dbReference type="InterPro" id="IPR007443">
    <property type="entry name" value="LpoA"/>
</dbReference>
<dbReference type="InterPro" id="IPR028082">
    <property type="entry name" value="Peripla_BP_I"/>
</dbReference>
<dbReference type="InterPro" id="IPR011990">
    <property type="entry name" value="TPR-like_helical_dom_sf"/>
</dbReference>
<dbReference type="PANTHER" id="PTHR38038">
    <property type="entry name" value="PENICILLIN-BINDING PROTEIN ACTIVATOR LPOA"/>
    <property type="match status" value="1"/>
</dbReference>
<dbReference type="PANTHER" id="PTHR38038:SF1">
    <property type="entry name" value="PENICILLIN-BINDING PROTEIN ACTIVATOR LPOA"/>
    <property type="match status" value="1"/>
</dbReference>
<dbReference type="Pfam" id="PF04348">
    <property type="entry name" value="LppC"/>
    <property type="match status" value="2"/>
</dbReference>
<dbReference type="SUPFAM" id="SSF53822">
    <property type="entry name" value="Periplasmic binding protein-like I"/>
    <property type="match status" value="1"/>
</dbReference>
<dbReference type="PROSITE" id="PS51257">
    <property type="entry name" value="PROKAR_LIPOPROTEIN"/>
    <property type="match status" value="1"/>
</dbReference>
<name>LPOA_ERWT9</name>
<comment type="function">
    <text evidence="1">Regulator of peptidoglycan synthesis that is essential for the function of penicillin-binding protein 1A (PBP1a).</text>
</comment>
<comment type="subunit">
    <text evidence="1">Interacts with PBP1a.</text>
</comment>
<comment type="subcellular location">
    <subcellularLocation>
        <location evidence="1">Cell outer membrane</location>
        <topology evidence="1">Lipid-anchor</topology>
        <orientation evidence="1">Periplasmic side</orientation>
    </subcellularLocation>
</comment>
<comment type="similarity">
    <text evidence="1">Belongs to the LpoA family.</text>
</comment>
<gene>
    <name evidence="1" type="primary">lpoA</name>
    <name type="ordered locus">ETA_29200</name>
</gene>
<organism>
    <name type="scientific">Erwinia tasmaniensis (strain DSM 17950 / CFBP 7177 / CIP 109463 / NCPPB 4357 / Et1/99)</name>
    <dbReference type="NCBI Taxonomy" id="465817"/>
    <lineage>
        <taxon>Bacteria</taxon>
        <taxon>Pseudomonadati</taxon>
        <taxon>Pseudomonadota</taxon>
        <taxon>Gammaproteobacteria</taxon>
        <taxon>Enterobacterales</taxon>
        <taxon>Erwiniaceae</taxon>
        <taxon>Erwinia</taxon>
    </lineage>
</organism>
<reference key="1">
    <citation type="journal article" date="2008" name="Environ. Microbiol.">
        <title>The genome of Erwinia tasmaniensis strain Et1/99, a non-pathogenic bacterium in the genus Erwinia.</title>
        <authorList>
            <person name="Kube M."/>
            <person name="Migdoll A.M."/>
            <person name="Mueller I."/>
            <person name="Kuhl H."/>
            <person name="Beck A."/>
            <person name="Reinhardt R."/>
            <person name="Geider K."/>
        </authorList>
    </citation>
    <scope>NUCLEOTIDE SEQUENCE [LARGE SCALE GENOMIC DNA]</scope>
    <source>
        <strain>DSM 17950 / CFBP 7177 / CIP 109463 / NCPPB 4357 / Et1/99</strain>
    </source>
</reference>
<feature type="signal peptide" evidence="1">
    <location>
        <begin position="1"/>
        <end position="26"/>
    </location>
</feature>
<feature type="chain" id="PRO_0000405931" description="Penicillin-binding protein activator LpoA">
    <location>
        <begin position="27"/>
        <end position="670"/>
    </location>
</feature>
<feature type="lipid moiety-binding region" description="N-palmitoyl cysteine" evidence="1">
    <location>
        <position position="27"/>
    </location>
</feature>
<feature type="lipid moiety-binding region" description="S-diacylglycerol cysteine" evidence="1">
    <location>
        <position position="27"/>
    </location>
</feature>
<proteinExistence type="inferred from homology"/>
<sequence length="670" mass="71852">MLPSKVVHRKAVRTVPLLLAALIFAGCTGQAPHTPPANVQGAADGTSDYYLQQVQQSADDNKVDWQLLAIRALLNEGKLPQAGDALTQLPADLNNIQRQERLLLLARLNVARQNLSGATDPLKQIDISALSQQQQVRYYQLQIAVGQGQPSLDVVRAWVALEPLQTSPADKQKNIDETWQALLQIPQQQINTLTINANENVLQGWLDLLGVYKNNVTAPDMLKSAIQDWQTRYPYNPAAKMLPTSLTQAQNLHPASMGKIALLLPLSGQAQVFANAIQKGFNDAKNGVLAQSTVAPSPAGPVQVPAATPGDAAVAVSPSATTSDKAVAEQPAPAINVTTAAPSASTQIQVYDTSSQPVEQLLTQAQNDGATLAIGPLLKSDVDKMLNSQTALNVLALNEPESVQNRPNICYFALSPEDEARDAAHHMWEQGKRAPLLLVPRTSLGDRVNKAFAAEWQKLGGATVLQQQFGSTAELKQGINSGAGIRLSGTPVNVQPQQQAGVTIAGLTIPAPPTDAQPGATSSNGRVDSVYIVATQDEMILIKPMIAMRISSRDNVGLYASSRSYQAGAGPDYRLELEGLQFSDAPLLSGANPALMQQAAKAFNNDYSLVRLYAMGVDAWTLANHFNEMRNQPGFQIKGDTGMLSANQDCIINRKLVWSQYHQGQIVPGT</sequence>
<protein>
    <recommendedName>
        <fullName evidence="1">Penicillin-binding protein activator LpoA</fullName>
        <shortName evidence="1">PBP activator LpoA</shortName>
    </recommendedName>
</protein>